<accession>G4ZSG0</accession>
<name>AVH52_PHYSP</name>
<evidence type="ECO:0000255" key="1"/>
<evidence type="ECO:0000269" key="2">
    <source>
    </source>
</evidence>
<evidence type="ECO:0000269" key="3">
    <source>
    </source>
</evidence>
<evidence type="ECO:0000269" key="4">
    <source>
    </source>
</evidence>
<evidence type="ECO:0000303" key="5">
    <source>
    </source>
</evidence>
<evidence type="ECO:0000305" key="6"/>
<evidence type="ECO:0000305" key="7">
    <source>
    </source>
</evidence>
<evidence type="ECO:0000305" key="8">
    <source>
    </source>
</evidence>
<reference key="1">
    <citation type="journal article" date="2006" name="Science">
        <title>Phytophthora genome sequences uncover evolutionary origins and mechanisms of pathogenesis.</title>
        <authorList>
            <person name="Tyler B.M."/>
            <person name="Tripathy S."/>
            <person name="Zhang X."/>
            <person name="Dehal P."/>
            <person name="Jiang R.H.Y."/>
            <person name="Aerts A."/>
            <person name="Arredondo F.D."/>
            <person name="Baxter L."/>
            <person name="Bensasson D."/>
            <person name="Beynon J.L."/>
            <person name="Chapman J."/>
            <person name="Damasceno C.M.B."/>
            <person name="Dorrance A.E."/>
            <person name="Dou D."/>
            <person name="Dickerman A.W."/>
            <person name="Dubchak I.L."/>
            <person name="Garbelotto M."/>
            <person name="Gijzen M."/>
            <person name="Gordon S.G."/>
            <person name="Govers F."/>
            <person name="Grunwald N.J."/>
            <person name="Huang W."/>
            <person name="Ivors K.L."/>
            <person name="Jones R.W."/>
            <person name="Kamoun S."/>
            <person name="Krampis K."/>
            <person name="Lamour K.H."/>
            <person name="Lee M.-K."/>
            <person name="McDonald W.H."/>
            <person name="Medina M."/>
            <person name="Meijer H.J.G."/>
            <person name="Nordberg E.K."/>
            <person name="Maclean D.J."/>
            <person name="Ospina-Giraldo M.D."/>
            <person name="Morris P.F."/>
            <person name="Phuntumart V."/>
            <person name="Putnam N.H."/>
            <person name="Rash S."/>
            <person name="Rose J.K.C."/>
            <person name="Sakihama Y."/>
            <person name="Salamov A.A."/>
            <person name="Savidor A."/>
            <person name="Scheuring C.F."/>
            <person name="Smith B.M."/>
            <person name="Sobral B.W.S."/>
            <person name="Terry A."/>
            <person name="Torto-Alalibo T.A."/>
            <person name="Win J."/>
            <person name="Xu Z."/>
            <person name="Zhang H."/>
            <person name="Grigoriev I.V."/>
            <person name="Rokhsar D.S."/>
            <person name="Boore J.L."/>
        </authorList>
    </citation>
    <scope>NUCLEOTIDE SEQUENCE [LARGE SCALE GENOMIC DNA]</scope>
    <source>
        <strain>P6497</strain>
    </source>
</reference>
<reference key="2">
    <citation type="journal article" date="2011" name="Plant Cell">
        <title>Transcriptional programming and functional interactions within the Phytophthora sojae RXLR effector repertoire.</title>
        <authorList>
            <person name="Wang Q."/>
            <person name="Han C."/>
            <person name="Ferreira A.O."/>
            <person name="Yu X."/>
            <person name="Ye W."/>
            <person name="Tripathy S."/>
            <person name="Kale S.D."/>
            <person name="Gu B."/>
            <person name="Sheng Y."/>
            <person name="Sui Y."/>
            <person name="Wang X."/>
            <person name="Zhang Z."/>
            <person name="Cheng B."/>
            <person name="Dong S."/>
            <person name="Shan W."/>
            <person name="Zheng X."/>
            <person name="Dou D."/>
            <person name="Tyler B.M."/>
            <person name="Wang Y."/>
        </authorList>
    </citation>
    <scope>IDENTIFICATION</scope>
    <scope>FUNCTION</scope>
    <scope>DOMAIN</scope>
</reference>
<reference key="3">
    <citation type="journal article" date="2015" name="Plant Cell">
        <title>A Phytophthora sojae glycoside hydrolase 12 protein is a major virulence factor during soybean infection and is recognized as a PAMP.</title>
        <authorList>
            <person name="Ma Z."/>
            <person name="Song T."/>
            <person name="Zhu L."/>
            <person name="Ye W."/>
            <person name="Wang Y."/>
            <person name="Shao Y."/>
            <person name="Dong S."/>
            <person name="Zhang Z."/>
            <person name="Dou D."/>
            <person name="Zheng X."/>
            <person name="Tyler B.M."/>
            <person name="Wang Y."/>
        </authorList>
    </citation>
    <scope>FUNCTION</scope>
</reference>
<reference key="4">
    <citation type="journal article" date="2018" name="Elife">
        <title>A Phytophthora effector recruits a host cytoplasmic transacetylase into nuclear speckles to enhance plant susceptibility.</title>
        <authorList>
            <person name="Li H."/>
            <person name="Wang H."/>
            <person name="Jing M."/>
            <person name="Zhu J."/>
            <person name="Guo B."/>
            <person name="Wang Y."/>
            <person name="Lin Y."/>
            <person name="Chen H."/>
            <person name="Kong L."/>
            <person name="Ma Z."/>
            <person name="Wang Y."/>
            <person name="Ye W."/>
            <person name="Dong S."/>
            <person name="Tyler B."/>
            <person name="Wang Y."/>
        </authorList>
    </citation>
    <scope>FUNCTION</scope>
    <scope>DISRUPTION PHENOTYPE</scope>
    <scope>INTERACTION WITH HOST TAP1</scope>
    <scope>SUBCELLULAR LOCATION</scope>
    <scope>DOMAIN</scope>
    <scope>MUTAGENESIS OF 69-SER--VAL-86; LYS-87; LYS-88; LYS-91; LYS-95; LYS-97 AND LYS-98</scope>
</reference>
<feature type="signal peptide" evidence="1">
    <location>
        <begin position="1"/>
        <end position="21"/>
    </location>
</feature>
<feature type="chain" id="PRO_5003472523" description="RxLR effector protein Avh52">
    <location>
        <begin position="22"/>
        <end position="122"/>
    </location>
</feature>
<feature type="region of interest" description="TAP1-binding" evidence="4">
    <location>
        <begin position="69"/>
        <end position="86"/>
    </location>
</feature>
<feature type="region of interest" description="Nuclear localization signal (NLS)" evidence="4">
    <location>
        <begin position="87"/>
        <end position="98"/>
    </location>
</feature>
<feature type="short sequence motif" description="RxLR-dEER" evidence="8">
    <location>
        <begin position="50"/>
        <end position="68"/>
    </location>
</feature>
<feature type="mutagenesis site" description="Impairs the interaction with host TAP1 and does not cause re-localization of TAP1 into nuclear speckles." evidence="4">
    <location>
        <begin position="69"/>
        <end position="86"/>
    </location>
</feature>
<feature type="mutagenesis site" description="Impairs host nuclear localization; when associated with A-88, A-91, A-95, A-97 and A-98." evidence="4">
    <original>K</original>
    <variation>A</variation>
    <location>
        <position position="87"/>
    </location>
</feature>
<feature type="mutagenesis site" description="Impairs host nuclear localization; when associated with A-87, A-91, A-95, A-97 and A-98." evidence="4">
    <original>K</original>
    <variation>A</variation>
    <location>
        <position position="88"/>
    </location>
</feature>
<feature type="mutagenesis site" description="Impairs host nuclear localization; when associated with A-87, A-88, A-95, A-97 and A-98." evidence="4">
    <original>K</original>
    <variation>A</variation>
    <location>
        <position position="91"/>
    </location>
</feature>
<feature type="mutagenesis site" description="Impairs host nuclear localization; when associated with A-87, A-88, A-91, A-97 and A-98." evidence="4">
    <original>K</original>
    <variation>A</variation>
    <location>
        <position position="95"/>
    </location>
</feature>
<feature type="mutagenesis site" description="Impairs host nuclear localization; when associated with A-87, A-88, A-91, A-95 and A-98." evidence="4">
    <original>K</original>
    <variation>A</variation>
    <location>
        <position position="97"/>
    </location>
</feature>
<feature type="mutagenesis site" description="Impairs host nuclear localization; when associated with A-87, A-88, A-91, A-95 and A-97." evidence="4">
    <original>K</original>
    <variation>A</variation>
    <location>
        <position position="98"/>
    </location>
</feature>
<dbReference type="EMBL" id="JH159156">
    <property type="protein sequence ID" value="EGZ14040.1"/>
    <property type="molecule type" value="Genomic_DNA"/>
</dbReference>
<dbReference type="RefSeq" id="XP_009531469.1">
    <property type="nucleotide sequence ID" value="XM_009533174.1"/>
</dbReference>
<dbReference type="SMR" id="G4ZSG0"/>
<dbReference type="STRING" id="1094619.G4ZSG0"/>
<dbReference type="EnsemblProtists" id="EGZ14040">
    <property type="protein sequence ID" value="EGZ14040"/>
    <property type="gene ID" value="PHYSODRAFT_355041"/>
</dbReference>
<dbReference type="GeneID" id="20649783"/>
<dbReference type="KEGG" id="psoj:PHYSODRAFT_355041"/>
<dbReference type="InParanoid" id="G4ZSG0"/>
<dbReference type="OMA" id="LAWAMKE"/>
<dbReference type="Proteomes" id="UP000002640">
    <property type="component" value="Unassembled WGS sequence"/>
</dbReference>
<dbReference type="GO" id="GO:0005576">
    <property type="term" value="C:extracellular region"/>
    <property type="evidence" value="ECO:0007669"/>
    <property type="project" value="UniProtKB-SubCell"/>
</dbReference>
<dbReference type="GO" id="GO:0042025">
    <property type="term" value="C:host cell nucleus"/>
    <property type="evidence" value="ECO:0007669"/>
    <property type="project" value="UniProtKB-SubCell"/>
</dbReference>
<dbReference type="GO" id="GO:0052026">
    <property type="term" value="P:symbiont-mediated perturbation of host transcription"/>
    <property type="evidence" value="ECO:0000314"/>
    <property type="project" value="UniProtKB"/>
</dbReference>
<dbReference type="InterPro" id="IPR031825">
    <property type="entry name" value="RXLR"/>
</dbReference>
<dbReference type="Pfam" id="PF16810">
    <property type="entry name" value="RXLR"/>
    <property type="match status" value="1"/>
</dbReference>
<comment type="function">
    <text evidence="2 3 4">Effector that suppresses plant defense responses during the early stages of pathogen infection (PubMed:21653195, PubMed:26163574, PubMed:30346270). Suppresses cell death induced by effectors and PAMPs in plant hosts (PubMed:26163574, PubMed:30346270). Interacts with host acetyltransferase TAP1 and causes TAP1 relocation into the nucleus where it acetylates histones H2A and H3 during early infection, thereby promoting susceptibility of host plant to P.sojae (PubMed:30346270).</text>
</comment>
<comment type="subunit">
    <text evidence="4">Interacts with host acetyl transferase TAP1.</text>
</comment>
<comment type="subcellular location">
    <subcellularLocation>
        <location evidence="4">Secreted</location>
    </subcellularLocation>
    <subcellularLocation>
        <location evidence="4">Host nucleus</location>
    </subcellularLocation>
</comment>
<comment type="domain">
    <text evidence="7">The RxLR-dEER motif acts to carry the protein into the host cell cytoplasm through binding to cell surface phosphatidylinositol-3-phosphate.</text>
</comment>
<comment type="domain">
    <text evidence="4">Residues 69 to 86 are required for the interaction with host TAP1 and its re-localization into nuclear speckles.</text>
</comment>
<comment type="domain">
    <text evidence="4">The nuclear localization signal (NLS) is required for localization into nucleus.</text>
</comment>
<comment type="disruption phenotype">
    <text evidence="4">Leads to smaller lesions on soybean seedlings.</text>
</comment>
<comment type="similarity">
    <text evidence="6">Belongs to the RxLR effector family.</text>
</comment>
<protein>
    <recommendedName>
        <fullName evidence="5">RxLR effector protein Avh52</fullName>
    </recommendedName>
    <alternativeName>
        <fullName evidence="5">Avirulence homolog protein 52</fullName>
    </alternativeName>
</protein>
<gene>
    <name evidence="5" type="primary">Avh52</name>
    <name type="ORF">PHYSODRAFT_355041</name>
</gene>
<sequence>MRLTSILVLVIAATFHTTGTALTLTKDSKAGIANGDSPASGDFIDANSARLLRRVEKDKVDYEQDEQRSFGALKDAVKKLNPVTAVKKFFKQRAKRKKVIQTARDADNNLAWAMKEVYKAAN</sequence>
<keyword id="KW-1048">Host nucleus</keyword>
<keyword id="KW-1185">Reference proteome</keyword>
<keyword id="KW-0964">Secreted</keyword>
<keyword id="KW-0732">Signal</keyword>
<keyword id="KW-0843">Virulence</keyword>
<proteinExistence type="evidence at protein level"/>
<organism>
    <name type="scientific">Phytophthora sojae (strain P6497)</name>
    <name type="common">Soybean stem and root rot agent</name>
    <name type="synonym">Phytophthora megasperma f. sp. glycines</name>
    <dbReference type="NCBI Taxonomy" id="1094619"/>
    <lineage>
        <taxon>Eukaryota</taxon>
        <taxon>Sar</taxon>
        <taxon>Stramenopiles</taxon>
        <taxon>Oomycota</taxon>
        <taxon>Peronosporales</taxon>
        <taxon>Peronosporaceae</taxon>
        <taxon>Phytophthora</taxon>
    </lineage>
</organism>